<name>EFP_PSEP1</name>
<proteinExistence type="inferred from homology"/>
<gene>
    <name evidence="1" type="primary">efp</name>
    <name type="ordered locus">Pput_3856</name>
</gene>
<comment type="function">
    <text evidence="1">Involved in peptide bond synthesis. Stimulates efficient translation and peptide-bond synthesis on native or reconstituted 70S ribosomes in vitro. Probably functions indirectly by altering the affinity of the ribosome for aminoacyl-tRNA, thus increasing their reactivity as acceptors for peptidyl transferase.</text>
</comment>
<comment type="pathway">
    <text evidence="1">Protein biosynthesis; polypeptide chain elongation.</text>
</comment>
<comment type="subcellular location">
    <subcellularLocation>
        <location evidence="1">Cytoplasm</location>
    </subcellularLocation>
</comment>
<comment type="similarity">
    <text evidence="1">Belongs to the elongation factor P family.</text>
</comment>
<dbReference type="EMBL" id="CP000712">
    <property type="protein sequence ID" value="ABQ79980.1"/>
    <property type="molecule type" value="Genomic_DNA"/>
</dbReference>
<dbReference type="SMR" id="A5W770"/>
<dbReference type="KEGG" id="ppf:Pput_3856"/>
<dbReference type="eggNOG" id="COG0231">
    <property type="taxonomic scope" value="Bacteria"/>
</dbReference>
<dbReference type="HOGENOM" id="CLU_074944_2_1_6"/>
<dbReference type="UniPathway" id="UPA00345"/>
<dbReference type="GO" id="GO:0005737">
    <property type="term" value="C:cytoplasm"/>
    <property type="evidence" value="ECO:0007669"/>
    <property type="project" value="UniProtKB-SubCell"/>
</dbReference>
<dbReference type="GO" id="GO:0003746">
    <property type="term" value="F:translation elongation factor activity"/>
    <property type="evidence" value="ECO:0007669"/>
    <property type="project" value="UniProtKB-UniRule"/>
</dbReference>
<dbReference type="GO" id="GO:0043043">
    <property type="term" value="P:peptide biosynthetic process"/>
    <property type="evidence" value="ECO:0007669"/>
    <property type="project" value="InterPro"/>
</dbReference>
<dbReference type="CDD" id="cd04470">
    <property type="entry name" value="S1_EF-P_repeat_1"/>
    <property type="match status" value="1"/>
</dbReference>
<dbReference type="CDD" id="cd05794">
    <property type="entry name" value="S1_EF-P_repeat_2"/>
    <property type="match status" value="1"/>
</dbReference>
<dbReference type="FunFam" id="2.30.30.30:FF:000003">
    <property type="entry name" value="Elongation factor P"/>
    <property type="match status" value="1"/>
</dbReference>
<dbReference type="FunFam" id="2.40.50.140:FF:000004">
    <property type="entry name" value="Elongation factor P"/>
    <property type="match status" value="1"/>
</dbReference>
<dbReference type="Gene3D" id="2.30.30.30">
    <property type="match status" value="1"/>
</dbReference>
<dbReference type="Gene3D" id="2.40.50.140">
    <property type="entry name" value="Nucleic acid-binding proteins"/>
    <property type="match status" value="2"/>
</dbReference>
<dbReference type="HAMAP" id="MF_00141">
    <property type="entry name" value="EF_P"/>
    <property type="match status" value="1"/>
</dbReference>
<dbReference type="InterPro" id="IPR015365">
    <property type="entry name" value="Elong-fact-P_C"/>
</dbReference>
<dbReference type="InterPro" id="IPR012340">
    <property type="entry name" value="NA-bd_OB-fold"/>
</dbReference>
<dbReference type="InterPro" id="IPR014722">
    <property type="entry name" value="Rib_uL2_dom2"/>
</dbReference>
<dbReference type="InterPro" id="IPR020599">
    <property type="entry name" value="Transl_elong_fac_P/YeiP"/>
</dbReference>
<dbReference type="InterPro" id="IPR013185">
    <property type="entry name" value="Transl_elong_KOW-like"/>
</dbReference>
<dbReference type="InterPro" id="IPR001059">
    <property type="entry name" value="Transl_elong_P/YeiP_cen"/>
</dbReference>
<dbReference type="InterPro" id="IPR011768">
    <property type="entry name" value="Transl_elongation_fac_P"/>
</dbReference>
<dbReference type="InterPro" id="IPR008991">
    <property type="entry name" value="Translation_prot_SH3-like_sf"/>
</dbReference>
<dbReference type="NCBIfam" id="TIGR00038">
    <property type="entry name" value="efp"/>
    <property type="match status" value="1"/>
</dbReference>
<dbReference type="NCBIfam" id="NF001810">
    <property type="entry name" value="PRK00529.1"/>
    <property type="match status" value="1"/>
</dbReference>
<dbReference type="PANTHER" id="PTHR30053">
    <property type="entry name" value="ELONGATION FACTOR P"/>
    <property type="match status" value="1"/>
</dbReference>
<dbReference type="PANTHER" id="PTHR30053:SF12">
    <property type="entry name" value="ELONGATION FACTOR P (EF-P) FAMILY PROTEIN"/>
    <property type="match status" value="1"/>
</dbReference>
<dbReference type="Pfam" id="PF01132">
    <property type="entry name" value="EFP"/>
    <property type="match status" value="1"/>
</dbReference>
<dbReference type="Pfam" id="PF08207">
    <property type="entry name" value="EFP_N"/>
    <property type="match status" value="1"/>
</dbReference>
<dbReference type="Pfam" id="PF09285">
    <property type="entry name" value="Elong-fact-P_C"/>
    <property type="match status" value="1"/>
</dbReference>
<dbReference type="PIRSF" id="PIRSF005901">
    <property type="entry name" value="EF-P"/>
    <property type="match status" value="1"/>
</dbReference>
<dbReference type="SMART" id="SM01185">
    <property type="entry name" value="EFP"/>
    <property type="match status" value="1"/>
</dbReference>
<dbReference type="SMART" id="SM00841">
    <property type="entry name" value="Elong-fact-P_C"/>
    <property type="match status" value="1"/>
</dbReference>
<dbReference type="SUPFAM" id="SSF50249">
    <property type="entry name" value="Nucleic acid-binding proteins"/>
    <property type="match status" value="2"/>
</dbReference>
<dbReference type="SUPFAM" id="SSF50104">
    <property type="entry name" value="Translation proteins SH3-like domain"/>
    <property type="match status" value="1"/>
</dbReference>
<accession>A5W770</accession>
<feature type="chain" id="PRO_1000010817" description="Elongation factor P">
    <location>
        <begin position="1"/>
        <end position="189"/>
    </location>
</feature>
<protein>
    <recommendedName>
        <fullName evidence="1">Elongation factor P</fullName>
        <shortName evidence="1">EF-P</shortName>
    </recommendedName>
</protein>
<sequence length="189" mass="21303">MKTGKELKPGTVLRIDNDPWLVQKAEFTKSGRNSAIMKTKLKNLLTGYKTETVYGADDKLDDVILDRKEATLSFINGDEYTFMDTTDYTMYELNAEDIEAVLPYIEEGMEDVCEAVFFEGRLVSVELPTTISRKVVYTENAARGDTSGKVMKPAKLANGTEISVADFIQIDEWIDIDTRDNSFKGRSKK</sequence>
<keyword id="KW-0963">Cytoplasm</keyword>
<keyword id="KW-0251">Elongation factor</keyword>
<keyword id="KW-0648">Protein biosynthesis</keyword>
<organism>
    <name type="scientific">Pseudomonas putida (strain ATCC 700007 / DSM 6899 / JCM 31910 / BCRC 17059 / LMG 24140 / F1)</name>
    <dbReference type="NCBI Taxonomy" id="351746"/>
    <lineage>
        <taxon>Bacteria</taxon>
        <taxon>Pseudomonadati</taxon>
        <taxon>Pseudomonadota</taxon>
        <taxon>Gammaproteobacteria</taxon>
        <taxon>Pseudomonadales</taxon>
        <taxon>Pseudomonadaceae</taxon>
        <taxon>Pseudomonas</taxon>
    </lineage>
</organism>
<reference key="1">
    <citation type="submission" date="2007-05" db="EMBL/GenBank/DDBJ databases">
        <title>Complete sequence of Pseudomonas putida F1.</title>
        <authorList>
            <consortium name="US DOE Joint Genome Institute"/>
            <person name="Copeland A."/>
            <person name="Lucas S."/>
            <person name="Lapidus A."/>
            <person name="Barry K."/>
            <person name="Detter J.C."/>
            <person name="Glavina del Rio T."/>
            <person name="Hammon N."/>
            <person name="Israni S."/>
            <person name="Dalin E."/>
            <person name="Tice H."/>
            <person name="Pitluck S."/>
            <person name="Chain P."/>
            <person name="Malfatti S."/>
            <person name="Shin M."/>
            <person name="Vergez L."/>
            <person name="Schmutz J."/>
            <person name="Larimer F."/>
            <person name="Land M."/>
            <person name="Hauser L."/>
            <person name="Kyrpides N."/>
            <person name="Lykidis A."/>
            <person name="Parales R."/>
            <person name="Richardson P."/>
        </authorList>
    </citation>
    <scope>NUCLEOTIDE SEQUENCE [LARGE SCALE GENOMIC DNA]</scope>
    <source>
        <strain>ATCC 700007 / DSM 6899 / JCM 31910 / BCRC 17059 / LMG 24140 / F1</strain>
    </source>
</reference>
<evidence type="ECO:0000255" key="1">
    <source>
        <dbReference type="HAMAP-Rule" id="MF_00141"/>
    </source>
</evidence>